<feature type="signal peptide" evidence="1">
    <location>
        <begin position="1"/>
        <end position="32"/>
    </location>
</feature>
<feature type="chain" id="PRO_0000012210" description="Dextranase">
    <location>
        <begin position="33"/>
        <end position="640"/>
    </location>
</feature>
<organism>
    <name type="scientific">Arthrobacter globiformis</name>
    <dbReference type="NCBI Taxonomy" id="1665"/>
    <lineage>
        <taxon>Bacteria</taxon>
        <taxon>Bacillati</taxon>
        <taxon>Actinomycetota</taxon>
        <taxon>Actinomycetes</taxon>
        <taxon>Micrococcales</taxon>
        <taxon>Micrococcaceae</taxon>
        <taxon>Arthrobacter</taxon>
    </lineage>
</organism>
<evidence type="ECO:0000255" key="1"/>
<evidence type="ECO:0000305" key="2"/>
<sequence length="640" mass="71143">MPGTGLGRLAKHVTAAAAVFLISTGAVLPAQAETAPGSTPSAAPAASVEKHPITTANNGNLHTWWHDNGVFSPAAPTQSDEVRRSSLYDVRVAQANQPQKAYDAFTYMSIPRSGKGKIGYTEEDGAEFSSEAGLTMSWSSFEYAKDVWVEVSLRTGQTISSADQVQIRPSSYNFEKQLVDADTVRIKVPYSDAGYRFSVEFEPQLYTAYNDMSGDSGKLTTEAEGNRPIHTEPRNSMMVFAEPKLRGEQKERLVPTQESGSIHYPEPGEVRNLNSVSAEIIYFRPGTYSMGSDYHAVLPANVKWVYLAPGAYVKGAFRFLHDTQSQYKVTGYGVLSGEQYVYEADTNNSYNHLSGASNCHSSCVKMLQFASADAEQKLDLQGVTVAEPPYHSFVVYGNEQTFHMNVENYKQVGSWYWQTDGIELYQGSTMKNTFFNANDDVLKMYHSDVSIDNTVVWKNENGPVVQWGWTPRNIDNVNVTNTTVIHNRMYWKDVKYNTCIFNSSSHWEDMGSTTKADPNTTVKNMRFENTTVEGMTNCAIRVYALSDTENIHIKNFNIGSWNGLDWTSQVSHLKRYTNSAGEKVTIGNELPDGNGLAIENYSVGGQVIEKSGGNWSDYQLGRLGFDGENWDSWNAWKSAP</sequence>
<keyword id="KW-0326">Glycosidase</keyword>
<keyword id="KW-0378">Hydrolase</keyword>
<keyword id="KW-0964">Secreted</keyword>
<keyword id="KW-0732">Signal</keyword>
<protein>
    <recommendedName>
        <fullName>Dextranase</fullName>
        <ecNumber>3.2.1.11</ecNumber>
    </recommendedName>
    <alternativeName>
        <fullName>Alpha-1,6-glucan-6-glucanohydrolase</fullName>
    </alternativeName>
    <alternativeName>
        <fullName>Endodextranase</fullName>
    </alternativeName>
</protein>
<dbReference type="EC" id="3.2.1.11"/>
<dbReference type="EMBL" id="D88361">
    <property type="protein sequence ID" value="BAA13596.1"/>
    <property type="molecule type" value="Genomic_DNA"/>
</dbReference>
<dbReference type="SMR" id="P70744"/>
<dbReference type="CAZy" id="GH49">
    <property type="family name" value="Glycoside Hydrolase Family 49"/>
</dbReference>
<dbReference type="GO" id="GO:0005576">
    <property type="term" value="C:extracellular region"/>
    <property type="evidence" value="ECO:0007669"/>
    <property type="project" value="UniProtKB-SubCell"/>
</dbReference>
<dbReference type="GO" id="GO:0033904">
    <property type="term" value="F:dextranase activity"/>
    <property type="evidence" value="ECO:0007669"/>
    <property type="project" value="UniProtKB-EC"/>
</dbReference>
<dbReference type="Gene3D" id="2.60.350.10">
    <property type="entry name" value="Dextranase, N-terminal"/>
    <property type="match status" value="1"/>
</dbReference>
<dbReference type="Gene3D" id="2.160.20.10">
    <property type="entry name" value="Single-stranded right-handed beta-helix, Pectin lyase-like"/>
    <property type="match status" value="1"/>
</dbReference>
<dbReference type="InterPro" id="IPR041402">
    <property type="entry name" value="B_solenoid_dext"/>
</dbReference>
<dbReference type="InterPro" id="IPR035953">
    <property type="entry name" value="Dextranase_N-ter"/>
</dbReference>
<dbReference type="InterPro" id="IPR005192">
    <property type="entry name" value="Glyco_hydro_49_C"/>
</dbReference>
<dbReference type="InterPro" id="IPR023226">
    <property type="entry name" value="Glyco_hydro_49_N_dom"/>
</dbReference>
<dbReference type="InterPro" id="IPR041274">
    <property type="entry name" value="IPU_b_solenoid"/>
</dbReference>
<dbReference type="InterPro" id="IPR012334">
    <property type="entry name" value="Pectin_lyas_fold"/>
</dbReference>
<dbReference type="InterPro" id="IPR011050">
    <property type="entry name" value="Pectin_lyase_fold/virulence"/>
</dbReference>
<dbReference type="Pfam" id="PF18841">
    <property type="entry name" value="B_solenoid_dext"/>
    <property type="match status" value="1"/>
</dbReference>
<dbReference type="Pfam" id="PF03718">
    <property type="entry name" value="Glyco_hydro_49"/>
    <property type="match status" value="1"/>
</dbReference>
<dbReference type="Pfam" id="PF17433">
    <property type="entry name" value="Glyco_hydro_49N"/>
    <property type="match status" value="1"/>
</dbReference>
<dbReference type="Pfam" id="PF18783">
    <property type="entry name" value="IPU_b_solenoid"/>
    <property type="match status" value="1"/>
</dbReference>
<dbReference type="SUPFAM" id="SSF101596">
    <property type="entry name" value="Dextranase, N-terminal domain"/>
    <property type="match status" value="1"/>
</dbReference>
<dbReference type="SUPFAM" id="SSF51126">
    <property type="entry name" value="Pectin lyase-like"/>
    <property type="match status" value="1"/>
</dbReference>
<reference key="1">
    <citation type="submission" date="1996-11" db="EMBL/GenBank/DDBJ databases">
        <authorList>
            <person name="Oguma T."/>
            <person name="Kurokawa T."/>
            <person name="Tobe K."/>
            <person name="Kitao S."/>
            <person name="Kobayashi M."/>
        </authorList>
    </citation>
    <scope>NUCLEOTIDE SEQUENCE [GENOMIC DNA]</scope>
    <source>
        <strain>T-3044</strain>
    </source>
</reference>
<accession>P70744</accession>
<comment type="catalytic activity">
    <reaction>
        <text>Endohydrolysis of (1-&gt;6)-alpha-D-glucosidic linkages in dextran.</text>
        <dbReference type="EC" id="3.2.1.11"/>
    </reaction>
</comment>
<comment type="subcellular location">
    <subcellularLocation>
        <location>Secreted</location>
    </subcellularLocation>
</comment>
<comment type="similarity">
    <text evidence="2">Belongs to the glycosyl hydrolase 49 family.</text>
</comment>
<proteinExistence type="inferred from homology"/>
<name>DEXT_ARTGO</name>